<evidence type="ECO:0000255" key="1">
    <source>
        <dbReference type="HAMAP-Rule" id="MF_00438"/>
    </source>
</evidence>
<reference key="1">
    <citation type="journal article" date="2004" name="Mol. Biol. Evol.">
        <title>The chloroplast genome of Nymphaea alba: whole-genome analyses and the problem of identifying the most basal angiosperm.</title>
        <authorList>
            <person name="Goremykin V.V."/>
            <person name="Hirsch-Ernst K.I."/>
            <person name="Woelfl S."/>
            <person name="Hellwig F.H."/>
        </authorList>
    </citation>
    <scope>NUCLEOTIDE SEQUENCE [LARGE SCALE GENOMIC DNA]</scope>
</reference>
<protein>
    <recommendedName>
        <fullName evidence="1">Photosystem II reaction center protein M</fullName>
        <shortName evidence="1">PSII-M</shortName>
    </recommendedName>
</protein>
<keyword id="KW-0150">Chloroplast</keyword>
<keyword id="KW-0472">Membrane</keyword>
<keyword id="KW-0602">Photosynthesis</keyword>
<keyword id="KW-0604">Photosystem II</keyword>
<keyword id="KW-0934">Plastid</keyword>
<keyword id="KW-0674">Reaction center</keyword>
<keyword id="KW-0793">Thylakoid</keyword>
<keyword id="KW-0812">Transmembrane</keyword>
<keyword id="KW-1133">Transmembrane helix</keyword>
<dbReference type="EMBL" id="AJ627251">
    <property type="protein sequence ID" value="CAF28587.1"/>
    <property type="molecule type" value="Genomic_DNA"/>
</dbReference>
<dbReference type="RefSeq" id="YP_053149.1">
    <property type="nucleotide sequence ID" value="NC_006050.1"/>
</dbReference>
<dbReference type="SMR" id="Q6EW54"/>
<dbReference type="GeneID" id="2896147"/>
<dbReference type="GO" id="GO:0009535">
    <property type="term" value="C:chloroplast thylakoid membrane"/>
    <property type="evidence" value="ECO:0007669"/>
    <property type="project" value="UniProtKB-SubCell"/>
</dbReference>
<dbReference type="GO" id="GO:0009523">
    <property type="term" value="C:photosystem II"/>
    <property type="evidence" value="ECO:0007669"/>
    <property type="project" value="UniProtKB-KW"/>
</dbReference>
<dbReference type="GO" id="GO:0019684">
    <property type="term" value="P:photosynthesis, light reaction"/>
    <property type="evidence" value="ECO:0007669"/>
    <property type="project" value="InterPro"/>
</dbReference>
<dbReference type="HAMAP" id="MF_00438">
    <property type="entry name" value="PSII_PsbM"/>
    <property type="match status" value="1"/>
</dbReference>
<dbReference type="InterPro" id="IPR007826">
    <property type="entry name" value="PSII_PsbM"/>
</dbReference>
<dbReference type="InterPro" id="IPR037269">
    <property type="entry name" value="PSII_PsbM_sf"/>
</dbReference>
<dbReference type="NCBIfam" id="TIGR03038">
    <property type="entry name" value="PS_II_psbM"/>
    <property type="match status" value="1"/>
</dbReference>
<dbReference type="PANTHER" id="PTHR35774">
    <property type="entry name" value="PHOTOSYSTEM II REACTION CENTER PROTEIN M"/>
    <property type="match status" value="1"/>
</dbReference>
<dbReference type="PANTHER" id="PTHR35774:SF1">
    <property type="entry name" value="PHOTOSYSTEM II REACTION CENTER PROTEIN M"/>
    <property type="match status" value="1"/>
</dbReference>
<dbReference type="Pfam" id="PF05151">
    <property type="entry name" value="PsbM"/>
    <property type="match status" value="1"/>
</dbReference>
<dbReference type="SUPFAM" id="SSF161033">
    <property type="entry name" value="Photosystem II reaction center protein M, PsbM"/>
    <property type="match status" value="1"/>
</dbReference>
<geneLocation type="chloroplast"/>
<name>PSBM_NYMAL</name>
<gene>
    <name evidence="1" type="primary">psbM</name>
</gene>
<sequence>MEVNILAFIATALFILVPTAFLLIIYVKTVSQND</sequence>
<accession>Q6EW54</accession>
<organism>
    <name type="scientific">Nymphaea alba</name>
    <name type="common">White water-lily</name>
    <name type="synonym">Castalia alba</name>
    <dbReference type="NCBI Taxonomy" id="34301"/>
    <lineage>
        <taxon>Eukaryota</taxon>
        <taxon>Viridiplantae</taxon>
        <taxon>Streptophyta</taxon>
        <taxon>Embryophyta</taxon>
        <taxon>Tracheophyta</taxon>
        <taxon>Spermatophyta</taxon>
        <taxon>Magnoliopsida</taxon>
        <taxon>Nymphaeales</taxon>
        <taxon>Nymphaeaceae</taxon>
        <taxon>Nymphaea</taxon>
    </lineage>
</organism>
<feature type="chain" id="PRO_0000217563" description="Photosystem II reaction center protein M">
    <location>
        <begin position="1"/>
        <end position="34"/>
    </location>
</feature>
<feature type="transmembrane region" description="Helical" evidence="1">
    <location>
        <begin position="5"/>
        <end position="25"/>
    </location>
</feature>
<comment type="function">
    <text evidence="1">One of the components of the core complex of photosystem II (PSII). PSII is a light-driven water:plastoquinone oxidoreductase that uses light energy to abstract electrons from H(2)O, generating O(2) and a proton gradient subsequently used for ATP formation. It consists of a core antenna complex that captures photons, and an electron transfer chain that converts photonic excitation into a charge separation. This subunit is found at the monomer-monomer interface.</text>
</comment>
<comment type="subunit">
    <text evidence="1">PSII is composed of 1 copy each of membrane proteins PsbA, PsbB, PsbC, PsbD, PsbE, PsbF, PsbH, PsbI, PsbJ, PsbK, PsbL, PsbM, PsbT, PsbX, PsbY, PsbZ, Psb30/Ycf12, at least 3 peripheral proteins of the oxygen-evolving complex and a large number of cofactors. It forms dimeric complexes.</text>
</comment>
<comment type="subcellular location">
    <subcellularLocation>
        <location evidence="1">Plastid</location>
        <location evidence="1">Chloroplast thylakoid membrane</location>
        <topology evidence="1">Single-pass membrane protein</topology>
    </subcellularLocation>
</comment>
<comment type="similarity">
    <text evidence="1">Belongs to the PsbM family.</text>
</comment>
<proteinExistence type="inferred from homology"/>